<organism>
    <name type="scientific">Corynebacterium efficiens (strain DSM 44549 / YS-314 / AJ 12310 / JCM 11189 / NBRC 100395)</name>
    <dbReference type="NCBI Taxonomy" id="196164"/>
    <lineage>
        <taxon>Bacteria</taxon>
        <taxon>Bacillati</taxon>
        <taxon>Actinomycetota</taxon>
        <taxon>Actinomycetes</taxon>
        <taxon>Mycobacteriales</taxon>
        <taxon>Corynebacteriaceae</taxon>
        <taxon>Corynebacterium</taxon>
    </lineage>
</organism>
<sequence>MTDAHHADDVRYQPLSEIDPEVAQAIAGELSRQRDTLEMIASENFVPRSVLQAQGSVLTNKYAEGYPGRRYYGGCEQVDIIEDLARDRAKALFDAEFANVQPHSGAQANAAVLMTLADPGDKIMGLSLAHGGHLTHGMKLNFSGKLYEVAAYGVDPDTMLVDMDQVREQAIKEQPKVIIAGWSAYPRHLDFAAFREIADEVGATLWVDMAHFAGLVAAGLHPSPVPYADVVSSTVHKTLGGPRSGIILAKQDYAKKLNSSVFPGQQGGPLMHAIAAKATALKIAGTDQFAERQARTIEGARILAERLTASDAKAAGIDVLTGGTDVHLVLADLRNSEMDGQQAEDLLHEVGITVNRNAVPFDPRPPMVTSGLRIGTPALATRGFDATAFTEVADIIGTALAQGKSADLESLQARVTKLAEQYPLYEGLEDWTIV</sequence>
<protein>
    <recommendedName>
        <fullName evidence="1">Serine hydroxymethyltransferase</fullName>
        <shortName evidence="1">SHMT</shortName>
        <shortName evidence="1">Serine methylase</shortName>
        <ecNumber evidence="1">2.1.2.1</ecNumber>
    </recommendedName>
</protein>
<keyword id="KW-0028">Amino-acid biosynthesis</keyword>
<keyword id="KW-0963">Cytoplasm</keyword>
<keyword id="KW-0554">One-carbon metabolism</keyword>
<keyword id="KW-0663">Pyridoxal phosphate</keyword>
<keyword id="KW-1185">Reference proteome</keyword>
<keyword id="KW-0808">Transferase</keyword>
<dbReference type="EC" id="2.1.2.1" evidence="1"/>
<dbReference type="EMBL" id="BA000035">
    <property type="protein sequence ID" value="BAC17868.1"/>
    <property type="status" value="ALT_INIT"/>
    <property type="molecule type" value="Genomic_DNA"/>
</dbReference>
<dbReference type="RefSeq" id="WP_006769983.1">
    <property type="nucleotide sequence ID" value="NC_004369.1"/>
</dbReference>
<dbReference type="SMR" id="Q8FQR1"/>
<dbReference type="STRING" id="196164.gene:10741466"/>
<dbReference type="KEGG" id="cef:CE1058"/>
<dbReference type="eggNOG" id="COG0112">
    <property type="taxonomic scope" value="Bacteria"/>
</dbReference>
<dbReference type="HOGENOM" id="CLU_022477_2_1_11"/>
<dbReference type="OrthoDB" id="9803846at2"/>
<dbReference type="UniPathway" id="UPA00193"/>
<dbReference type="UniPathway" id="UPA00288">
    <property type="reaction ID" value="UER01023"/>
</dbReference>
<dbReference type="Proteomes" id="UP000001409">
    <property type="component" value="Chromosome"/>
</dbReference>
<dbReference type="GO" id="GO:0005829">
    <property type="term" value="C:cytosol"/>
    <property type="evidence" value="ECO:0007669"/>
    <property type="project" value="TreeGrafter"/>
</dbReference>
<dbReference type="GO" id="GO:0004372">
    <property type="term" value="F:glycine hydroxymethyltransferase activity"/>
    <property type="evidence" value="ECO:0007669"/>
    <property type="project" value="UniProtKB-UniRule"/>
</dbReference>
<dbReference type="GO" id="GO:0030170">
    <property type="term" value="F:pyridoxal phosphate binding"/>
    <property type="evidence" value="ECO:0007669"/>
    <property type="project" value="UniProtKB-UniRule"/>
</dbReference>
<dbReference type="GO" id="GO:0019264">
    <property type="term" value="P:glycine biosynthetic process from serine"/>
    <property type="evidence" value="ECO:0007669"/>
    <property type="project" value="UniProtKB-UniRule"/>
</dbReference>
<dbReference type="GO" id="GO:0035999">
    <property type="term" value="P:tetrahydrofolate interconversion"/>
    <property type="evidence" value="ECO:0007669"/>
    <property type="project" value="UniProtKB-UniRule"/>
</dbReference>
<dbReference type="CDD" id="cd00378">
    <property type="entry name" value="SHMT"/>
    <property type="match status" value="1"/>
</dbReference>
<dbReference type="FunFam" id="3.40.640.10:FF:000001">
    <property type="entry name" value="Serine hydroxymethyltransferase"/>
    <property type="match status" value="1"/>
</dbReference>
<dbReference type="Gene3D" id="3.90.1150.10">
    <property type="entry name" value="Aspartate Aminotransferase, domain 1"/>
    <property type="match status" value="1"/>
</dbReference>
<dbReference type="Gene3D" id="3.40.640.10">
    <property type="entry name" value="Type I PLP-dependent aspartate aminotransferase-like (Major domain)"/>
    <property type="match status" value="1"/>
</dbReference>
<dbReference type="HAMAP" id="MF_00051">
    <property type="entry name" value="SHMT"/>
    <property type="match status" value="1"/>
</dbReference>
<dbReference type="InterPro" id="IPR015424">
    <property type="entry name" value="PyrdxlP-dep_Trfase"/>
</dbReference>
<dbReference type="InterPro" id="IPR015421">
    <property type="entry name" value="PyrdxlP-dep_Trfase_major"/>
</dbReference>
<dbReference type="InterPro" id="IPR015422">
    <property type="entry name" value="PyrdxlP-dep_Trfase_small"/>
</dbReference>
<dbReference type="InterPro" id="IPR001085">
    <property type="entry name" value="Ser_HO-MeTrfase"/>
</dbReference>
<dbReference type="InterPro" id="IPR049943">
    <property type="entry name" value="Ser_HO-MeTrfase-like"/>
</dbReference>
<dbReference type="InterPro" id="IPR019798">
    <property type="entry name" value="Ser_HO-MeTrfase_PLP_BS"/>
</dbReference>
<dbReference type="InterPro" id="IPR039429">
    <property type="entry name" value="SHMT-like_dom"/>
</dbReference>
<dbReference type="NCBIfam" id="NF000586">
    <property type="entry name" value="PRK00011.1"/>
    <property type="match status" value="1"/>
</dbReference>
<dbReference type="PANTHER" id="PTHR11680">
    <property type="entry name" value="SERINE HYDROXYMETHYLTRANSFERASE"/>
    <property type="match status" value="1"/>
</dbReference>
<dbReference type="PANTHER" id="PTHR11680:SF35">
    <property type="entry name" value="SERINE HYDROXYMETHYLTRANSFERASE 1"/>
    <property type="match status" value="1"/>
</dbReference>
<dbReference type="Pfam" id="PF00464">
    <property type="entry name" value="SHMT"/>
    <property type="match status" value="1"/>
</dbReference>
<dbReference type="PIRSF" id="PIRSF000412">
    <property type="entry name" value="SHMT"/>
    <property type="match status" value="1"/>
</dbReference>
<dbReference type="SUPFAM" id="SSF53383">
    <property type="entry name" value="PLP-dependent transferases"/>
    <property type="match status" value="1"/>
</dbReference>
<dbReference type="PROSITE" id="PS00096">
    <property type="entry name" value="SHMT"/>
    <property type="match status" value="1"/>
</dbReference>
<reference key="1">
    <citation type="journal article" date="2003" name="Genome Res.">
        <title>Comparative complete genome sequence analysis of the amino acid replacements responsible for the thermostability of Corynebacterium efficiens.</title>
        <authorList>
            <person name="Nishio Y."/>
            <person name="Nakamura Y."/>
            <person name="Kawarabayasi Y."/>
            <person name="Usuda Y."/>
            <person name="Kimura E."/>
            <person name="Sugimoto S."/>
            <person name="Matsui K."/>
            <person name="Yamagishi A."/>
            <person name="Kikuchi H."/>
            <person name="Ikeo K."/>
            <person name="Gojobori T."/>
        </authorList>
    </citation>
    <scope>NUCLEOTIDE SEQUENCE [LARGE SCALE GENOMIC DNA]</scope>
    <source>
        <strain>DSM 44549 / YS-314 / AJ 12310 / JCM 11189 / NBRC 100395</strain>
    </source>
</reference>
<comment type="function">
    <text evidence="1">Catalyzes the reversible interconversion of serine and glycine with tetrahydrofolate (THF) serving as the one-carbon carrier. This reaction serves as the major source of one-carbon groups required for the biosynthesis of purines, thymidylate, methionine, and other important biomolecules. Also exhibits THF-independent aldolase activity toward beta-hydroxyamino acids, producing glycine and aldehydes, via a retro-aldol mechanism.</text>
</comment>
<comment type="catalytic activity">
    <reaction evidence="1">
        <text>(6R)-5,10-methylene-5,6,7,8-tetrahydrofolate + glycine + H2O = (6S)-5,6,7,8-tetrahydrofolate + L-serine</text>
        <dbReference type="Rhea" id="RHEA:15481"/>
        <dbReference type="ChEBI" id="CHEBI:15377"/>
        <dbReference type="ChEBI" id="CHEBI:15636"/>
        <dbReference type="ChEBI" id="CHEBI:33384"/>
        <dbReference type="ChEBI" id="CHEBI:57305"/>
        <dbReference type="ChEBI" id="CHEBI:57453"/>
        <dbReference type="EC" id="2.1.2.1"/>
    </reaction>
</comment>
<comment type="cofactor">
    <cofactor evidence="1">
        <name>pyridoxal 5'-phosphate</name>
        <dbReference type="ChEBI" id="CHEBI:597326"/>
    </cofactor>
</comment>
<comment type="pathway">
    <text evidence="1">One-carbon metabolism; tetrahydrofolate interconversion.</text>
</comment>
<comment type="pathway">
    <text evidence="1">Amino-acid biosynthesis; glycine biosynthesis; glycine from L-serine: step 1/1.</text>
</comment>
<comment type="subunit">
    <text evidence="1">Homodimer.</text>
</comment>
<comment type="subcellular location">
    <subcellularLocation>
        <location evidence="1">Cytoplasm</location>
    </subcellularLocation>
</comment>
<comment type="similarity">
    <text evidence="1">Belongs to the SHMT family.</text>
</comment>
<comment type="sequence caution" evidence="2">
    <conflict type="erroneous initiation">
        <sequence resource="EMBL-CDS" id="BAC17868"/>
    </conflict>
</comment>
<gene>
    <name evidence="1" type="primary">glyA</name>
    <name type="ordered locus">CE1058</name>
</gene>
<feature type="chain" id="PRO_0000113566" description="Serine hydroxymethyltransferase">
    <location>
        <begin position="1"/>
        <end position="434"/>
    </location>
</feature>
<feature type="binding site" evidence="1">
    <location>
        <position position="128"/>
    </location>
    <ligand>
        <name>(6S)-5,6,7,8-tetrahydrofolate</name>
        <dbReference type="ChEBI" id="CHEBI:57453"/>
    </ligand>
</feature>
<feature type="binding site" evidence="1">
    <location>
        <begin position="132"/>
        <end position="134"/>
    </location>
    <ligand>
        <name>(6S)-5,6,7,8-tetrahydrofolate</name>
        <dbReference type="ChEBI" id="CHEBI:57453"/>
    </ligand>
</feature>
<feature type="site" description="Plays an important role in substrate specificity" evidence="1">
    <location>
        <position position="236"/>
    </location>
</feature>
<feature type="modified residue" description="N6-(pyridoxal phosphate)lysine" evidence="1">
    <location>
        <position position="237"/>
    </location>
</feature>
<accession>Q8FQR1</accession>
<evidence type="ECO:0000255" key="1">
    <source>
        <dbReference type="HAMAP-Rule" id="MF_00051"/>
    </source>
</evidence>
<evidence type="ECO:0000305" key="2"/>
<proteinExistence type="inferred from homology"/>
<name>GLYA_COREF</name>